<feature type="chain" id="PRO_1000092819" description="Heat-inducible transcription repressor HrcA">
    <location>
        <begin position="1"/>
        <end position="341"/>
    </location>
</feature>
<evidence type="ECO:0000255" key="1">
    <source>
        <dbReference type="HAMAP-Rule" id="MF_00081"/>
    </source>
</evidence>
<keyword id="KW-1185">Reference proteome</keyword>
<keyword id="KW-0678">Repressor</keyword>
<keyword id="KW-0346">Stress response</keyword>
<keyword id="KW-0804">Transcription</keyword>
<keyword id="KW-0805">Transcription regulation</keyword>
<organism>
    <name type="scientific">Mycobacteroides abscessus (strain ATCC 19977 / DSM 44196 / CCUG 20993 / CIP 104536 / JCM 13569 / NCTC 13031 / TMC 1543 / L948)</name>
    <name type="common">Mycobacterium abscessus</name>
    <dbReference type="NCBI Taxonomy" id="561007"/>
    <lineage>
        <taxon>Bacteria</taxon>
        <taxon>Bacillati</taxon>
        <taxon>Actinomycetota</taxon>
        <taxon>Actinomycetes</taxon>
        <taxon>Mycobacteriales</taxon>
        <taxon>Mycobacteriaceae</taxon>
        <taxon>Mycobacteroides</taxon>
        <taxon>Mycobacteroides abscessus</taxon>
    </lineage>
</organism>
<comment type="function">
    <text evidence="1">Negative regulator of class I heat shock genes (grpE-dnaK-dnaJ and groELS operons). Prevents heat-shock induction of these operons.</text>
</comment>
<comment type="similarity">
    <text evidence="1">Belongs to the HrcA family.</text>
</comment>
<gene>
    <name evidence="1" type="primary">hrcA</name>
    <name type="ordered locus">MAB_1665</name>
</gene>
<protein>
    <recommendedName>
        <fullName evidence="1">Heat-inducible transcription repressor HrcA</fullName>
    </recommendedName>
</protein>
<dbReference type="EMBL" id="CU458896">
    <property type="protein sequence ID" value="CAM61750.1"/>
    <property type="molecule type" value="Genomic_DNA"/>
</dbReference>
<dbReference type="RefSeq" id="WP_005060339.1">
    <property type="nucleotide sequence ID" value="NZ_MLCG01000002.1"/>
</dbReference>
<dbReference type="SMR" id="B1MN38"/>
<dbReference type="GeneID" id="93378616"/>
<dbReference type="KEGG" id="mab:MAB_1665"/>
<dbReference type="Proteomes" id="UP000007137">
    <property type="component" value="Chromosome"/>
</dbReference>
<dbReference type="GO" id="GO:0003677">
    <property type="term" value="F:DNA binding"/>
    <property type="evidence" value="ECO:0007669"/>
    <property type="project" value="InterPro"/>
</dbReference>
<dbReference type="GO" id="GO:0045892">
    <property type="term" value="P:negative regulation of DNA-templated transcription"/>
    <property type="evidence" value="ECO:0007669"/>
    <property type="project" value="UniProtKB-UniRule"/>
</dbReference>
<dbReference type="FunFam" id="1.10.10.10:FF:000049">
    <property type="entry name" value="Heat-inducible transcription repressor HrcA"/>
    <property type="match status" value="1"/>
</dbReference>
<dbReference type="Gene3D" id="3.30.450.40">
    <property type="match status" value="1"/>
</dbReference>
<dbReference type="Gene3D" id="3.30.390.60">
    <property type="entry name" value="Heat-inducible transcription repressor hrca homolog, domain 3"/>
    <property type="match status" value="1"/>
</dbReference>
<dbReference type="Gene3D" id="1.10.10.10">
    <property type="entry name" value="Winged helix-like DNA-binding domain superfamily/Winged helix DNA-binding domain"/>
    <property type="match status" value="1"/>
</dbReference>
<dbReference type="HAMAP" id="MF_00081">
    <property type="entry name" value="HrcA"/>
    <property type="match status" value="1"/>
</dbReference>
<dbReference type="InterPro" id="IPR029016">
    <property type="entry name" value="GAF-like_dom_sf"/>
</dbReference>
<dbReference type="InterPro" id="IPR002571">
    <property type="entry name" value="HrcA"/>
</dbReference>
<dbReference type="InterPro" id="IPR021153">
    <property type="entry name" value="HrcA_C"/>
</dbReference>
<dbReference type="InterPro" id="IPR036388">
    <property type="entry name" value="WH-like_DNA-bd_sf"/>
</dbReference>
<dbReference type="InterPro" id="IPR036390">
    <property type="entry name" value="WH_DNA-bd_sf"/>
</dbReference>
<dbReference type="InterPro" id="IPR023120">
    <property type="entry name" value="WHTH_transcript_rep_HrcA_IDD"/>
</dbReference>
<dbReference type="NCBIfam" id="TIGR00331">
    <property type="entry name" value="hrcA"/>
    <property type="match status" value="1"/>
</dbReference>
<dbReference type="PANTHER" id="PTHR34824">
    <property type="entry name" value="HEAT-INDUCIBLE TRANSCRIPTION REPRESSOR HRCA"/>
    <property type="match status" value="1"/>
</dbReference>
<dbReference type="PANTHER" id="PTHR34824:SF1">
    <property type="entry name" value="HEAT-INDUCIBLE TRANSCRIPTION REPRESSOR HRCA"/>
    <property type="match status" value="1"/>
</dbReference>
<dbReference type="Pfam" id="PF01628">
    <property type="entry name" value="HrcA"/>
    <property type="match status" value="1"/>
</dbReference>
<dbReference type="PIRSF" id="PIRSF005485">
    <property type="entry name" value="HrcA"/>
    <property type="match status" value="1"/>
</dbReference>
<dbReference type="SUPFAM" id="SSF55781">
    <property type="entry name" value="GAF domain-like"/>
    <property type="match status" value="1"/>
</dbReference>
<dbReference type="SUPFAM" id="SSF46785">
    <property type="entry name" value="Winged helix' DNA-binding domain"/>
    <property type="match status" value="1"/>
</dbReference>
<accession>B1MN38</accession>
<name>HRCA_MYCA9</name>
<sequence length="341" mass="36502">MASADDRRFEVLRAIVADYVTTKEPIGSKALVDRHGLGVSSATVRNDMAVLEAEGYIAQPHTSSGRVPTEKGYREFVNRLEDVKPLSGAERKAILNFLEGGVDLDDVLRRAVRLLAQMTRQVAVVQYPTLSSSSVRHLEVVSLSPARLLLVVITDTGRVDQRIVELGDVINDEQLGRLRVLLGAALDGKKLSAASVAVAELAEQSDDDLRDPITRAATVLVETLVEHHEERLLLGGTANLTRNAADFGGQLRTVLEALEEQVVVLRLLAAQQEAGRVTVHIGHETAAEQMIGTSVVSTPYGAGGAVFGGMGVLGPTRMDYPGTIANVAAVAMYIGEVLANR</sequence>
<reference key="1">
    <citation type="journal article" date="2009" name="PLoS ONE">
        <title>Non mycobacterial virulence genes in the genome of the emerging pathogen Mycobacterium abscessus.</title>
        <authorList>
            <person name="Ripoll F."/>
            <person name="Pasek S."/>
            <person name="Schenowitz C."/>
            <person name="Dossat C."/>
            <person name="Barbe V."/>
            <person name="Rottman M."/>
            <person name="Macheras E."/>
            <person name="Heym B."/>
            <person name="Herrmann J.L."/>
            <person name="Daffe M."/>
            <person name="Brosch R."/>
            <person name="Risler J.L."/>
            <person name="Gaillard J.L."/>
        </authorList>
    </citation>
    <scope>NUCLEOTIDE SEQUENCE [LARGE SCALE GENOMIC DNA]</scope>
    <source>
        <strain>ATCC 19977 / DSM 44196 / CCUG 20993 / CIP 104536 / JCM 13569 / NCTC 13031 / TMC 1543 / L948</strain>
    </source>
</reference>
<proteinExistence type="inferred from homology"/>